<feature type="chain" id="PRO_0000371632" description="Small ribosomal subunit protein uS2">
    <location>
        <begin position="1"/>
        <end position="293"/>
    </location>
</feature>
<feature type="region of interest" description="Disordered" evidence="2">
    <location>
        <begin position="265"/>
        <end position="293"/>
    </location>
</feature>
<reference key="1">
    <citation type="journal article" date="2005" name="Nature">
        <title>Sequencing of Aspergillus nidulans and comparative analysis with A. fumigatus and A. oryzae.</title>
        <authorList>
            <person name="Galagan J.E."/>
            <person name="Calvo S.E."/>
            <person name="Cuomo C."/>
            <person name="Ma L.-J."/>
            <person name="Wortman J.R."/>
            <person name="Batzoglou S."/>
            <person name="Lee S.-I."/>
            <person name="Bastuerkmen M."/>
            <person name="Spevak C.C."/>
            <person name="Clutterbuck J."/>
            <person name="Kapitonov V."/>
            <person name="Jurka J."/>
            <person name="Scazzocchio C."/>
            <person name="Farman M.L."/>
            <person name="Butler J."/>
            <person name="Purcell S."/>
            <person name="Harris S."/>
            <person name="Braus G.H."/>
            <person name="Draht O."/>
            <person name="Busch S."/>
            <person name="D'Enfert C."/>
            <person name="Bouchier C."/>
            <person name="Goldman G.H."/>
            <person name="Bell-Pedersen D."/>
            <person name="Griffiths-Jones S."/>
            <person name="Doonan J.H."/>
            <person name="Yu J."/>
            <person name="Vienken K."/>
            <person name="Pain A."/>
            <person name="Freitag M."/>
            <person name="Selker E.U."/>
            <person name="Archer D.B."/>
            <person name="Penalva M.A."/>
            <person name="Oakley B.R."/>
            <person name="Momany M."/>
            <person name="Tanaka T."/>
            <person name="Kumagai T."/>
            <person name="Asai K."/>
            <person name="Machida M."/>
            <person name="Nierman W.C."/>
            <person name="Denning D.W."/>
            <person name="Caddick M.X."/>
            <person name="Hynes M."/>
            <person name="Paoletti M."/>
            <person name="Fischer R."/>
            <person name="Miller B.L."/>
            <person name="Dyer P.S."/>
            <person name="Sachs M.S."/>
            <person name="Osmani S.A."/>
            <person name="Birren B.W."/>
        </authorList>
    </citation>
    <scope>NUCLEOTIDE SEQUENCE [LARGE SCALE GENOMIC DNA]</scope>
    <source>
        <strain>FGSC A4 / ATCC 38163 / CBS 112.46 / NRRL 194 / M139</strain>
    </source>
</reference>
<reference key="2">
    <citation type="journal article" date="2009" name="Fungal Genet. Biol.">
        <title>The 2008 update of the Aspergillus nidulans genome annotation: a community effort.</title>
        <authorList>
            <person name="Wortman J.R."/>
            <person name="Gilsenan J.M."/>
            <person name="Joardar V."/>
            <person name="Deegan J."/>
            <person name="Clutterbuck J."/>
            <person name="Andersen M.R."/>
            <person name="Archer D."/>
            <person name="Bencina M."/>
            <person name="Braus G."/>
            <person name="Coutinho P."/>
            <person name="von Dohren H."/>
            <person name="Doonan J."/>
            <person name="Driessen A.J."/>
            <person name="Durek P."/>
            <person name="Espeso E."/>
            <person name="Fekete E."/>
            <person name="Flipphi M."/>
            <person name="Estrada C.G."/>
            <person name="Geysens S."/>
            <person name="Goldman G."/>
            <person name="de Groot P.W."/>
            <person name="Hansen K."/>
            <person name="Harris S.D."/>
            <person name="Heinekamp T."/>
            <person name="Helmstaedt K."/>
            <person name="Henrissat B."/>
            <person name="Hofmann G."/>
            <person name="Homan T."/>
            <person name="Horio T."/>
            <person name="Horiuchi H."/>
            <person name="James S."/>
            <person name="Jones M."/>
            <person name="Karaffa L."/>
            <person name="Karanyi Z."/>
            <person name="Kato M."/>
            <person name="Keller N."/>
            <person name="Kelly D.E."/>
            <person name="Kiel J.A."/>
            <person name="Kim J.M."/>
            <person name="van der Klei I.J."/>
            <person name="Klis F.M."/>
            <person name="Kovalchuk A."/>
            <person name="Krasevec N."/>
            <person name="Kubicek C.P."/>
            <person name="Liu B."/>
            <person name="Maccabe A."/>
            <person name="Meyer V."/>
            <person name="Mirabito P."/>
            <person name="Miskei M."/>
            <person name="Mos M."/>
            <person name="Mullins J."/>
            <person name="Nelson D.R."/>
            <person name="Nielsen J."/>
            <person name="Oakley B.R."/>
            <person name="Osmani S.A."/>
            <person name="Pakula T."/>
            <person name="Paszewski A."/>
            <person name="Paulsen I."/>
            <person name="Pilsyk S."/>
            <person name="Pocsi I."/>
            <person name="Punt P.J."/>
            <person name="Ram A.F."/>
            <person name="Ren Q."/>
            <person name="Robellet X."/>
            <person name="Robson G."/>
            <person name="Seiboth B."/>
            <person name="van Solingen P."/>
            <person name="Specht T."/>
            <person name="Sun J."/>
            <person name="Taheri-Talesh N."/>
            <person name="Takeshita N."/>
            <person name="Ussery D."/>
            <person name="vanKuyk P.A."/>
            <person name="Visser H."/>
            <person name="van de Vondervoort P.J."/>
            <person name="de Vries R.P."/>
            <person name="Walton J."/>
            <person name="Xiang X."/>
            <person name="Xiong Y."/>
            <person name="Zeng A.P."/>
            <person name="Brandt B.W."/>
            <person name="Cornell M.J."/>
            <person name="van den Hondel C.A."/>
            <person name="Visser J."/>
            <person name="Oliver S.G."/>
            <person name="Turner G."/>
        </authorList>
    </citation>
    <scope>GENOME REANNOTATION</scope>
    <source>
        <strain>FGSC A4 / ATCC 38163 / CBS 112.46 / NRRL 194 / M139</strain>
    </source>
</reference>
<sequence length="293" mass="31579">MAPSQLPPIFNPTPQDIEMLLAAQCHLGSKNLQVHMEPYLWKTRPDGVNVINVGKTWEKILLAARIIAAIDNPADICVISARPYGQRAVLKFASHTGATAIAGRFTPGNFTNYITRSFKEPRLIVVTDPRTDAQAIKEASYVNIPVIALCDTDSPTDFVDVAIPTNNKGRHAIGLIWWLLAREVLRLRGTLANREVDWDVVVDLYFYRDPEAEENKEVAEEKVASAEDVGAGAIESGFAAESWDAQGAAAPAAFAAAGATSWEADGGDWAASSAPAPGGENWAEAQPAEGAKW</sequence>
<comment type="function">
    <text evidence="1">Required for the assembly and/or stability of the 40S ribosomal subunit. Required for the processing of the 20S rRNA-precursor to mature 18S rRNA in a late step of the maturation of 40S ribosomal subunits.</text>
</comment>
<comment type="subunit">
    <text evidence="1">Component of the small ribosomal subunit. Mature ribosomes consist of a small (40S) and a large (60S) subunit. The 40S subunit contains about 33 different proteins and 1 molecule of RNA (18S). The 60S subunit contains about 49 different proteins and 3 molecules of RNA (25S, 5.8S and 5S). Interacts with rps21.</text>
</comment>
<comment type="subcellular location">
    <subcellularLocation>
        <location evidence="1">Cytoplasm</location>
    </subcellularLocation>
</comment>
<comment type="similarity">
    <text evidence="1">Belongs to the universal ribosomal protein uS2 family.</text>
</comment>
<comment type="sequence caution" evidence="3">
    <conflict type="erroneous gene model prediction">
        <sequence resource="EMBL-CDS" id="EAA63743"/>
    </conflict>
</comment>
<name>RSSA_EMENI</name>
<proteinExistence type="inferred from homology"/>
<dbReference type="EMBL" id="AACD01000051">
    <property type="protein sequence ID" value="EAA63743.1"/>
    <property type="status" value="ALT_SEQ"/>
    <property type="molecule type" value="Genomic_DNA"/>
</dbReference>
<dbReference type="EMBL" id="BN001306">
    <property type="protein sequence ID" value="CBF83264.1"/>
    <property type="molecule type" value="Genomic_DNA"/>
</dbReference>
<dbReference type="RefSeq" id="XP_660776.1">
    <property type="nucleotide sequence ID" value="XM_655684.1"/>
</dbReference>
<dbReference type="SMR" id="Q5B8F8"/>
<dbReference type="FunCoup" id="Q5B8F8">
    <property type="interactions" value="1240"/>
</dbReference>
<dbReference type="STRING" id="227321.Q5B8F8"/>
<dbReference type="EnsemblFungi" id="CBF83264">
    <property type="protein sequence ID" value="CBF83264"/>
    <property type="gene ID" value="ANIA_03172"/>
</dbReference>
<dbReference type="VEuPathDB" id="FungiDB:AN3172"/>
<dbReference type="eggNOG" id="KOG0830">
    <property type="taxonomic scope" value="Eukaryota"/>
</dbReference>
<dbReference type="HOGENOM" id="CLU_058171_0_1_1"/>
<dbReference type="InParanoid" id="Q5B8F8"/>
<dbReference type="OMA" id="VKNFFEP"/>
<dbReference type="OrthoDB" id="414863at2759"/>
<dbReference type="Proteomes" id="UP000000560">
    <property type="component" value="Chromosome VI"/>
</dbReference>
<dbReference type="GO" id="GO:0022627">
    <property type="term" value="C:cytosolic small ribosomal subunit"/>
    <property type="evidence" value="ECO:0000318"/>
    <property type="project" value="GO_Central"/>
</dbReference>
<dbReference type="GO" id="GO:0003735">
    <property type="term" value="F:structural constituent of ribosome"/>
    <property type="evidence" value="ECO:0000318"/>
    <property type="project" value="GO_Central"/>
</dbReference>
<dbReference type="GO" id="GO:0002181">
    <property type="term" value="P:cytoplasmic translation"/>
    <property type="evidence" value="ECO:0000318"/>
    <property type="project" value="GO_Central"/>
</dbReference>
<dbReference type="GO" id="GO:0000028">
    <property type="term" value="P:ribosomal small subunit assembly"/>
    <property type="evidence" value="ECO:0000318"/>
    <property type="project" value="GO_Central"/>
</dbReference>
<dbReference type="CDD" id="cd01425">
    <property type="entry name" value="RPS2"/>
    <property type="match status" value="1"/>
</dbReference>
<dbReference type="FunFam" id="3.40.50.10490:FF:000010">
    <property type="entry name" value="40S ribosomal protein S0"/>
    <property type="match status" value="1"/>
</dbReference>
<dbReference type="Gene3D" id="3.40.50.10490">
    <property type="entry name" value="Glucose-6-phosphate isomerase like protein, domain 1"/>
    <property type="match status" value="1"/>
</dbReference>
<dbReference type="HAMAP" id="MF_03015">
    <property type="entry name" value="Ribosomal_S2_euk"/>
    <property type="match status" value="1"/>
</dbReference>
<dbReference type="InterPro" id="IPR001865">
    <property type="entry name" value="Ribosomal_uS2"/>
</dbReference>
<dbReference type="InterPro" id="IPR032281">
    <property type="entry name" value="Ribosomal_uS2_C"/>
</dbReference>
<dbReference type="InterPro" id="IPR018130">
    <property type="entry name" value="Ribosomal_uS2_CS"/>
</dbReference>
<dbReference type="InterPro" id="IPR027498">
    <property type="entry name" value="Ribosomal_uS2_euk"/>
</dbReference>
<dbReference type="InterPro" id="IPR005707">
    <property type="entry name" value="Ribosomal_uS2_euk/arc"/>
</dbReference>
<dbReference type="InterPro" id="IPR023591">
    <property type="entry name" value="Ribosomal_uS2_flav_dom_sf"/>
</dbReference>
<dbReference type="NCBIfam" id="TIGR01012">
    <property type="entry name" value="uS2_euk_arch"/>
    <property type="match status" value="1"/>
</dbReference>
<dbReference type="PANTHER" id="PTHR11489">
    <property type="entry name" value="40S RIBOSOMAL PROTEIN SA"/>
    <property type="match status" value="1"/>
</dbReference>
<dbReference type="Pfam" id="PF16122">
    <property type="entry name" value="40S_SA_C"/>
    <property type="match status" value="1"/>
</dbReference>
<dbReference type="Pfam" id="PF00318">
    <property type="entry name" value="Ribosomal_S2"/>
    <property type="match status" value="2"/>
</dbReference>
<dbReference type="PRINTS" id="PR00395">
    <property type="entry name" value="RIBOSOMALS2"/>
</dbReference>
<dbReference type="SUPFAM" id="SSF52313">
    <property type="entry name" value="Ribosomal protein S2"/>
    <property type="match status" value="1"/>
</dbReference>
<dbReference type="PROSITE" id="PS00963">
    <property type="entry name" value="RIBOSOMAL_S2_2"/>
    <property type="match status" value="1"/>
</dbReference>
<organism>
    <name type="scientific">Emericella nidulans (strain FGSC A4 / ATCC 38163 / CBS 112.46 / NRRL 194 / M139)</name>
    <name type="common">Aspergillus nidulans</name>
    <dbReference type="NCBI Taxonomy" id="227321"/>
    <lineage>
        <taxon>Eukaryota</taxon>
        <taxon>Fungi</taxon>
        <taxon>Dikarya</taxon>
        <taxon>Ascomycota</taxon>
        <taxon>Pezizomycotina</taxon>
        <taxon>Eurotiomycetes</taxon>
        <taxon>Eurotiomycetidae</taxon>
        <taxon>Eurotiales</taxon>
        <taxon>Aspergillaceae</taxon>
        <taxon>Aspergillus</taxon>
        <taxon>Aspergillus subgen. Nidulantes</taxon>
    </lineage>
</organism>
<evidence type="ECO:0000255" key="1">
    <source>
        <dbReference type="HAMAP-Rule" id="MF_03015"/>
    </source>
</evidence>
<evidence type="ECO:0000256" key="2">
    <source>
        <dbReference type="SAM" id="MobiDB-lite"/>
    </source>
</evidence>
<evidence type="ECO:0000305" key="3"/>
<accession>Q5B8F8</accession>
<accession>C8VIE2</accession>
<keyword id="KW-0963">Cytoplasm</keyword>
<keyword id="KW-1185">Reference proteome</keyword>
<keyword id="KW-0687">Ribonucleoprotein</keyword>
<keyword id="KW-0689">Ribosomal protein</keyword>
<protein>
    <recommendedName>
        <fullName evidence="1">Small ribosomal subunit protein uS2</fullName>
    </recommendedName>
    <alternativeName>
        <fullName evidence="3">40S ribosomal protein S0</fullName>
    </alternativeName>
</protein>
<gene>
    <name type="primary">rps0</name>
    <name type="ORF">AN3172</name>
</gene>